<evidence type="ECO:0000255" key="1"/>
<evidence type="ECO:0000269" key="2">
    <source>
    </source>
</evidence>
<evidence type="ECO:0000269" key="3">
    <source>
    </source>
</evidence>
<evidence type="ECO:0000269" key="4">
    <source>
    </source>
</evidence>
<evidence type="ECO:0000303" key="5">
    <source>
    </source>
</evidence>
<evidence type="ECO:0000305" key="6"/>
<evidence type="ECO:0000305" key="7">
    <source>
    </source>
</evidence>
<evidence type="ECO:0000305" key="8">
    <source>
    </source>
</evidence>
<sequence length="58" mass="6563">MRCLPVFVILLLLIASVPSVDAELKAKDDMPQASFHDNAERDQQKKTSDCCFYHNCCC</sequence>
<name>CTDA_CONTE</name>
<dbReference type="EMBL" id="AF214956">
    <property type="protein sequence ID" value="AAG60384.1"/>
    <property type="molecule type" value="mRNA"/>
</dbReference>
<dbReference type="ConoServer" id="643">
    <property type="toxin name" value="TxXIIIA precursor"/>
</dbReference>
<dbReference type="GO" id="GO:0005576">
    <property type="term" value="C:extracellular region"/>
    <property type="evidence" value="ECO:0007669"/>
    <property type="project" value="UniProtKB-SubCell"/>
</dbReference>
<dbReference type="GO" id="GO:0090729">
    <property type="term" value="F:toxin activity"/>
    <property type="evidence" value="ECO:0007669"/>
    <property type="project" value="UniProtKB-KW"/>
</dbReference>
<dbReference type="InterPro" id="IPR031565">
    <property type="entry name" value="T-conotoxin"/>
</dbReference>
<dbReference type="Pfam" id="PF16981">
    <property type="entry name" value="Chi-conotoxin"/>
    <property type="match status" value="1"/>
</dbReference>
<proteinExistence type="evidence at protein level"/>
<protein>
    <recommendedName>
        <fullName evidence="5">Conotoxin TxXIIIA</fullName>
    </recommendedName>
</protein>
<accession>Q9BPH1</accession>
<organism>
    <name type="scientific">Conus textile</name>
    <name type="common">Cloth-of-gold cone</name>
    <dbReference type="NCBI Taxonomy" id="6494"/>
    <lineage>
        <taxon>Eukaryota</taxon>
        <taxon>Metazoa</taxon>
        <taxon>Spiralia</taxon>
        <taxon>Lophotrochozoa</taxon>
        <taxon>Mollusca</taxon>
        <taxon>Gastropoda</taxon>
        <taxon>Caenogastropoda</taxon>
        <taxon>Neogastropoda</taxon>
        <taxon>Conoidea</taxon>
        <taxon>Conidae</taxon>
        <taxon>Conus</taxon>
        <taxon>Cylinder</taxon>
    </lineage>
</organism>
<comment type="subunit">
    <text evidence="2 3">Homodimer; disulfide-linked.</text>
</comment>
<comment type="subcellular location">
    <subcellularLocation>
        <location evidence="2 3 4">Secreted</location>
    </subcellularLocation>
</comment>
<comment type="tissue specificity">
    <text evidence="7 8">Expressed by the venom duct.</text>
</comment>
<comment type="domain">
    <text evidence="6">The cysteine framework is V (CC-CC).</text>
</comment>
<comment type="PTM">
    <text>5 disulfide bonds are present in each homodimer: two intrachain disulfide bonds per subunit, and one interchain disulfide bond linking the two subunits.</text>
</comment>
<comment type="mass spectrometry" mass="2784.722" method="MALDI" evidence="3">
    <text>Homodimer.</text>
</comment>
<comment type="mass spectrometry" mass="2784.716" error="0.02" method="Electrospray" evidence="2"/>
<comment type="similarity">
    <text evidence="6">Belongs to the conotoxin T superfamily.</text>
</comment>
<keyword id="KW-0165">Cleavage on pair of basic residues</keyword>
<keyword id="KW-0903">Direct protein sequencing</keyword>
<keyword id="KW-1015">Disulfide bond</keyword>
<keyword id="KW-0964">Secreted</keyword>
<keyword id="KW-0732">Signal</keyword>
<keyword id="KW-0800">Toxin</keyword>
<feature type="signal peptide" evidence="1">
    <location>
        <begin position="1"/>
        <end position="22"/>
    </location>
</feature>
<feature type="propeptide" id="PRO_0000370229" evidence="6">
    <location>
        <begin position="23"/>
        <end position="46"/>
    </location>
</feature>
<feature type="peptide" id="PRO_0000370230" description="Conotoxin TxXIIIA" evidence="2 3">
    <location>
        <begin position="47"/>
        <end position="58"/>
    </location>
</feature>
<reference key="1">
    <citation type="journal article" date="2001" name="Mol. Biol. Evol.">
        <title>Mechanisms for evolving hypervariability: the case of conopeptides.</title>
        <authorList>
            <person name="Conticello S.G."/>
            <person name="Gilad Y."/>
            <person name="Avidan N."/>
            <person name="Ben-Asher E."/>
            <person name="Levy Z."/>
            <person name="Fainzilber M."/>
        </authorList>
    </citation>
    <scope>NUCLEOTIDE SEQUENCE [MRNA]</scope>
    <source>
        <tissue>Venom duct</tissue>
    </source>
</reference>
<reference key="2">
    <citation type="journal article" date="2009" name="J. Proteomics">
        <title>TxXIIIA, an atypical homodimeric conotoxin found in the Conus textile venom.</title>
        <authorList>
            <person name="Quinton L."/>
            <person name="Gilles N."/>
            <person name="De Pauw E."/>
        </authorList>
    </citation>
    <scope>PROTEIN SEQUENCE OF 47-58</scope>
    <scope>SUBUNIT</scope>
    <scope>SUBCELLULAR LOCATION</scope>
    <scope>DISULFIDE BONDS</scope>
    <scope>MASS SPECTROMETRY</scope>
    <source>
        <tissue>Venom</tissue>
    </source>
</reference>
<reference key="3">
    <citation type="journal article" date="2009" name="Proc. Natl. Acad. Sci. U.S.A.">
        <title>Rapid sensitive analysis of cysteine rich peptide venom components.</title>
        <authorList>
            <person name="Ueberheide B.M."/>
            <person name="Fenyo D."/>
            <person name="Alewood P.F."/>
            <person name="Chait B.T."/>
        </authorList>
    </citation>
    <scope>PROTEIN SEQUENCE OF 47-58</scope>
    <scope>SUBUNIT</scope>
    <scope>SUBCELLULAR LOCATION</scope>
    <scope>MASS SPECTROMETRY</scope>
    <scope>DISULFIDE BONDS</scope>
    <source>
        <tissue>Venom</tissue>
    </source>
</reference>
<reference key="4">
    <citation type="journal article" date="2012" name="J. Proteome Res.">
        <title>Constrained de novo sequencing of conotoxins.</title>
        <authorList>
            <person name="Bhatia S."/>
            <person name="Kil Y.J."/>
            <person name="Ueberheide B."/>
            <person name="Chait B.T."/>
            <person name="Tayo L."/>
            <person name="Cruz L."/>
            <person name="Lu B."/>
            <person name="Yates J.R. III"/>
            <person name="Bern M."/>
        </authorList>
    </citation>
    <scope>IDENTIFICATION BY MASS SPECTROMETRY</scope>
    <scope>SUBCELLULAR LOCATION</scope>
    <source>
        <tissue>Venom</tissue>
    </source>
</reference>